<name>BACD1_HUMAN</name>
<evidence type="ECO:0000250" key="1">
    <source>
        <dbReference type="UniProtKB" id="Q8BGV7"/>
    </source>
</evidence>
<evidence type="ECO:0000255" key="2">
    <source>
        <dbReference type="PROSITE-ProRule" id="PRU00037"/>
    </source>
</evidence>
<evidence type="ECO:0000256" key="3">
    <source>
        <dbReference type="SAM" id="MobiDB-lite"/>
    </source>
</evidence>
<evidence type="ECO:0000269" key="4">
    <source>
    </source>
</evidence>
<evidence type="ECO:0000269" key="5">
    <source>
    </source>
</evidence>
<evidence type="ECO:0000269" key="6">
    <source>
    </source>
</evidence>
<evidence type="ECO:0000269" key="7">
    <source>
    </source>
</evidence>
<evidence type="ECO:0000269" key="8">
    <source>
    </source>
</evidence>
<evidence type="ECO:0000269" key="9">
    <source>
    </source>
</evidence>
<evidence type="ECO:0000269" key="10">
    <source>
    </source>
</evidence>
<evidence type="ECO:0000303" key="11">
    <source>
    </source>
</evidence>
<evidence type="ECO:0000303" key="12">
    <source>
    </source>
</evidence>
<evidence type="ECO:0000305" key="13"/>
<evidence type="ECO:0007744" key="14">
    <source>
        <dbReference type="PDB" id="4UIJ"/>
    </source>
</evidence>
<evidence type="ECO:0007829" key="15">
    <source>
        <dbReference type="PDB" id="4UIJ"/>
    </source>
</evidence>
<protein>
    <recommendedName>
        <fullName evidence="12">BTB/POZ domain-containing adapter for CUL3-mediated RhoA degradation protein 1</fullName>
        <shortName evidence="12">hBACURD1</shortName>
    </recommendedName>
    <alternativeName>
        <fullName evidence="13">BTB/POZ domain-containing protein KCTD13</fullName>
    </alternativeName>
    <alternativeName>
        <fullName evidence="11">Polymerase delta-interacting protein 1</fullName>
    </alternativeName>
    <alternativeName>
        <fullName>TNFAIP1-like protein</fullName>
    </alternativeName>
</protein>
<reference key="1">
    <citation type="journal article" date="2001" name="Proc. Natl. Acad. Sci. U.S.A.">
        <title>A tumor necrosis factor alpha- and interleukin 6-inducible protein that interacts with the small subunit of DNA polymerase delta and proliferating cell nuclear antigen.</title>
        <authorList>
            <person name="He H."/>
            <person name="Tan C.-K."/>
            <person name="Downey K.M."/>
            <person name="So A.G."/>
        </authorList>
    </citation>
    <scope>NUCLEOTIDE SEQUENCE [MRNA]</scope>
    <scope>SUBCELLULAR LOCATION</scope>
    <scope>INTERACTION WITH PCNA AND POLD2</scope>
    <scope>TISSUE SPECIFICITY</scope>
    <scope>INDUCTION</scope>
</reference>
<reference key="2">
    <citation type="submission" date="2006-12" db="EMBL/GenBank/DDBJ databases">
        <authorList>
            <person name="He H."/>
            <person name="Tan C.-K."/>
            <person name="Downey K.M."/>
            <person name="So A.G."/>
        </authorList>
    </citation>
    <scope>SEQUENCE REVISION</scope>
</reference>
<reference key="3">
    <citation type="submission" date="2001-02" db="EMBL/GenBank/DDBJ databases">
        <title>Cloning and characterization of FKSG86, a novel gene encoding a TNFAIP1-like protein.</title>
        <authorList>
            <person name="Wang Y.-G."/>
            <person name="Gong L."/>
        </authorList>
    </citation>
    <scope>NUCLEOTIDE SEQUENCE [MRNA]</scope>
</reference>
<reference key="4">
    <citation type="journal article" date="2004" name="Proc. Natl. Acad. Sci. U.S.A.">
        <title>Large-scale cDNA transfection screening for genes related to cancer development and progression.</title>
        <authorList>
            <person name="Wan D."/>
            <person name="Gong Y."/>
            <person name="Qin W."/>
            <person name="Zhang P."/>
            <person name="Li J."/>
            <person name="Wei L."/>
            <person name="Zhou X."/>
            <person name="Li H."/>
            <person name="Qiu X."/>
            <person name="Zhong F."/>
            <person name="He L."/>
            <person name="Yu J."/>
            <person name="Yao G."/>
            <person name="Jiang H."/>
            <person name="Qian L."/>
            <person name="Yu Y."/>
            <person name="Shu H."/>
            <person name="Chen X."/>
            <person name="Xu H."/>
            <person name="Guo M."/>
            <person name="Pan Z."/>
            <person name="Chen Y."/>
            <person name="Ge C."/>
            <person name="Yang S."/>
            <person name="Gu J."/>
        </authorList>
    </citation>
    <scope>NUCLEOTIDE SEQUENCE [LARGE SCALE MRNA]</scope>
</reference>
<reference key="5">
    <citation type="journal article" date="2004" name="Nat. Genet.">
        <title>Complete sequencing and characterization of 21,243 full-length human cDNAs.</title>
        <authorList>
            <person name="Ota T."/>
            <person name="Suzuki Y."/>
            <person name="Nishikawa T."/>
            <person name="Otsuki T."/>
            <person name="Sugiyama T."/>
            <person name="Irie R."/>
            <person name="Wakamatsu A."/>
            <person name="Hayashi K."/>
            <person name="Sato H."/>
            <person name="Nagai K."/>
            <person name="Kimura K."/>
            <person name="Makita H."/>
            <person name="Sekine M."/>
            <person name="Obayashi M."/>
            <person name="Nishi T."/>
            <person name="Shibahara T."/>
            <person name="Tanaka T."/>
            <person name="Ishii S."/>
            <person name="Yamamoto J."/>
            <person name="Saito K."/>
            <person name="Kawai Y."/>
            <person name="Isono Y."/>
            <person name="Nakamura Y."/>
            <person name="Nagahari K."/>
            <person name="Murakami K."/>
            <person name="Yasuda T."/>
            <person name="Iwayanagi T."/>
            <person name="Wagatsuma M."/>
            <person name="Shiratori A."/>
            <person name="Sudo H."/>
            <person name="Hosoiri T."/>
            <person name="Kaku Y."/>
            <person name="Kodaira H."/>
            <person name="Kondo H."/>
            <person name="Sugawara M."/>
            <person name="Takahashi M."/>
            <person name="Kanda K."/>
            <person name="Yokoi T."/>
            <person name="Furuya T."/>
            <person name="Kikkawa E."/>
            <person name="Omura Y."/>
            <person name="Abe K."/>
            <person name="Kamihara K."/>
            <person name="Katsuta N."/>
            <person name="Sato K."/>
            <person name="Tanikawa M."/>
            <person name="Yamazaki M."/>
            <person name="Ninomiya K."/>
            <person name="Ishibashi T."/>
            <person name="Yamashita H."/>
            <person name="Murakawa K."/>
            <person name="Fujimori K."/>
            <person name="Tanai H."/>
            <person name="Kimata M."/>
            <person name="Watanabe M."/>
            <person name="Hiraoka S."/>
            <person name="Chiba Y."/>
            <person name="Ishida S."/>
            <person name="Ono Y."/>
            <person name="Takiguchi S."/>
            <person name="Watanabe S."/>
            <person name="Yosida M."/>
            <person name="Hotuta T."/>
            <person name="Kusano J."/>
            <person name="Kanehori K."/>
            <person name="Takahashi-Fujii A."/>
            <person name="Hara H."/>
            <person name="Tanase T.-O."/>
            <person name="Nomura Y."/>
            <person name="Togiya S."/>
            <person name="Komai F."/>
            <person name="Hara R."/>
            <person name="Takeuchi K."/>
            <person name="Arita M."/>
            <person name="Imose N."/>
            <person name="Musashino K."/>
            <person name="Yuuki H."/>
            <person name="Oshima A."/>
            <person name="Sasaki N."/>
            <person name="Aotsuka S."/>
            <person name="Yoshikawa Y."/>
            <person name="Matsunawa H."/>
            <person name="Ichihara T."/>
            <person name="Shiohata N."/>
            <person name="Sano S."/>
            <person name="Moriya S."/>
            <person name="Momiyama H."/>
            <person name="Satoh N."/>
            <person name="Takami S."/>
            <person name="Terashima Y."/>
            <person name="Suzuki O."/>
            <person name="Nakagawa S."/>
            <person name="Senoh A."/>
            <person name="Mizoguchi H."/>
            <person name="Goto Y."/>
            <person name="Shimizu F."/>
            <person name="Wakebe H."/>
            <person name="Hishigaki H."/>
            <person name="Watanabe T."/>
            <person name="Sugiyama A."/>
            <person name="Takemoto M."/>
            <person name="Kawakami B."/>
            <person name="Yamazaki M."/>
            <person name="Watanabe K."/>
            <person name="Kumagai A."/>
            <person name="Itakura S."/>
            <person name="Fukuzumi Y."/>
            <person name="Fujimori Y."/>
            <person name="Komiyama M."/>
            <person name="Tashiro H."/>
            <person name="Tanigami A."/>
            <person name="Fujiwara T."/>
            <person name="Ono T."/>
            <person name="Yamada K."/>
            <person name="Fujii Y."/>
            <person name="Ozaki K."/>
            <person name="Hirao M."/>
            <person name="Ohmori Y."/>
            <person name="Kawabata A."/>
            <person name="Hikiji T."/>
            <person name="Kobatake N."/>
            <person name="Inagaki H."/>
            <person name="Ikema Y."/>
            <person name="Okamoto S."/>
            <person name="Okitani R."/>
            <person name="Kawakami T."/>
            <person name="Noguchi S."/>
            <person name="Itoh T."/>
            <person name="Shigeta K."/>
            <person name="Senba T."/>
            <person name="Matsumura K."/>
            <person name="Nakajima Y."/>
            <person name="Mizuno T."/>
            <person name="Morinaga M."/>
            <person name="Sasaki M."/>
            <person name="Togashi T."/>
            <person name="Oyama M."/>
            <person name="Hata H."/>
            <person name="Watanabe M."/>
            <person name="Komatsu T."/>
            <person name="Mizushima-Sugano J."/>
            <person name="Satoh T."/>
            <person name="Shirai Y."/>
            <person name="Takahashi Y."/>
            <person name="Nakagawa K."/>
            <person name="Okumura K."/>
            <person name="Nagase T."/>
            <person name="Nomura N."/>
            <person name="Kikuchi H."/>
            <person name="Masuho Y."/>
            <person name="Yamashita R."/>
            <person name="Nakai K."/>
            <person name="Yada T."/>
            <person name="Nakamura Y."/>
            <person name="Ohara O."/>
            <person name="Isogai T."/>
            <person name="Sugano S."/>
        </authorList>
    </citation>
    <scope>NUCLEOTIDE SEQUENCE [LARGE SCALE MRNA]</scope>
    <source>
        <tissue>Amygdala</tissue>
    </source>
</reference>
<reference key="6">
    <citation type="journal article" date="2004" name="Nature">
        <title>The sequence and analysis of duplication-rich human chromosome 16.</title>
        <authorList>
            <person name="Martin J."/>
            <person name="Han C."/>
            <person name="Gordon L.A."/>
            <person name="Terry A."/>
            <person name="Prabhakar S."/>
            <person name="She X."/>
            <person name="Xie G."/>
            <person name="Hellsten U."/>
            <person name="Chan Y.M."/>
            <person name="Altherr M."/>
            <person name="Couronne O."/>
            <person name="Aerts A."/>
            <person name="Bajorek E."/>
            <person name="Black S."/>
            <person name="Blumer H."/>
            <person name="Branscomb E."/>
            <person name="Brown N.C."/>
            <person name="Bruno W.J."/>
            <person name="Buckingham J.M."/>
            <person name="Callen D.F."/>
            <person name="Campbell C.S."/>
            <person name="Campbell M.L."/>
            <person name="Campbell E.W."/>
            <person name="Caoile C."/>
            <person name="Challacombe J.F."/>
            <person name="Chasteen L.A."/>
            <person name="Chertkov O."/>
            <person name="Chi H.C."/>
            <person name="Christensen M."/>
            <person name="Clark L.M."/>
            <person name="Cohn J.D."/>
            <person name="Denys M."/>
            <person name="Detter J.C."/>
            <person name="Dickson M."/>
            <person name="Dimitrijevic-Bussod M."/>
            <person name="Escobar J."/>
            <person name="Fawcett J.J."/>
            <person name="Flowers D."/>
            <person name="Fotopulos D."/>
            <person name="Glavina T."/>
            <person name="Gomez M."/>
            <person name="Gonzales E."/>
            <person name="Goodstein D."/>
            <person name="Goodwin L.A."/>
            <person name="Grady D.L."/>
            <person name="Grigoriev I."/>
            <person name="Groza M."/>
            <person name="Hammon N."/>
            <person name="Hawkins T."/>
            <person name="Haydu L."/>
            <person name="Hildebrand C.E."/>
            <person name="Huang W."/>
            <person name="Israni S."/>
            <person name="Jett J."/>
            <person name="Jewett P.B."/>
            <person name="Kadner K."/>
            <person name="Kimball H."/>
            <person name="Kobayashi A."/>
            <person name="Krawczyk M.-C."/>
            <person name="Leyba T."/>
            <person name="Longmire J.L."/>
            <person name="Lopez F."/>
            <person name="Lou Y."/>
            <person name="Lowry S."/>
            <person name="Ludeman T."/>
            <person name="Manohar C.F."/>
            <person name="Mark G.A."/>
            <person name="McMurray K.L."/>
            <person name="Meincke L.J."/>
            <person name="Morgan J."/>
            <person name="Moyzis R.K."/>
            <person name="Mundt M.O."/>
            <person name="Munk A.C."/>
            <person name="Nandkeshwar R.D."/>
            <person name="Pitluck S."/>
            <person name="Pollard M."/>
            <person name="Predki P."/>
            <person name="Parson-Quintana B."/>
            <person name="Ramirez L."/>
            <person name="Rash S."/>
            <person name="Retterer J."/>
            <person name="Ricke D.O."/>
            <person name="Robinson D.L."/>
            <person name="Rodriguez A."/>
            <person name="Salamov A."/>
            <person name="Saunders E.H."/>
            <person name="Scott D."/>
            <person name="Shough T."/>
            <person name="Stallings R.L."/>
            <person name="Stalvey M."/>
            <person name="Sutherland R.D."/>
            <person name="Tapia R."/>
            <person name="Tesmer J.G."/>
            <person name="Thayer N."/>
            <person name="Thompson L.S."/>
            <person name="Tice H."/>
            <person name="Torney D.C."/>
            <person name="Tran-Gyamfi M."/>
            <person name="Tsai M."/>
            <person name="Ulanovsky L.E."/>
            <person name="Ustaszewska A."/>
            <person name="Vo N."/>
            <person name="White P.S."/>
            <person name="Williams A.L."/>
            <person name="Wills P.L."/>
            <person name="Wu J.-R."/>
            <person name="Wu K."/>
            <person name="Yang J."/>
            <person name="DeJong P."/>
            <person name="Bruce D."/>
            <person name="Doggett N.A."/>
            <person name="Deaven L."/>
            <person name="Schmutz J."/>
            <person name="Grimwood J."/>
            <person name="Richardson P."/>
            <person name="Rokhsar D.S."/>
            <person name="Eichler E.E."/>
            <person name="Gilna P."/>
            <person name="Lucas S.M."/>
            <person name="Myers R.M."/>
            <person name="Rubin E.M."/>
            <person name="Pennacchio L.A."/>
        </authorList>
    </citation>
    <scope>NUCLEOTIDE SEQUENCE [LARGE SCALE GENOMIC DNA]</scope>
</reference>
<reference key="7">
    <citation type="submission" date="2005-07" db="EMBL/GenBank/DDBJ databases">
        <authorList>
            <person name="Mural R.J."/>
            <person name="Istrail S."/>
            <person name="Sutton G.G."/>
            <person name="Florea L."/>
            <person name="Halpern A.L."/>
            <person name="Mobarry C.M."/>
            <person name="Lippert R."/>
            <person name="Walenz B."/>
            <person name="Shatkay H."/>
            <person name="Dew I."/>
            <person name="Miller J.R."/>
            <person name="Flanigan M.J."/>
            <person name="Edwards N.J."/>
            <person name="Bolanos R."/>
            <person name="Fasulo D."/>
            <person name="Halldorsson B.V."/>
            <person name="Hannenhalli S."/>
            <person name="Turner R."/>
            <person name="Yooseph S."/>
            <person name="Lu F."/>
            <person name="Nusskern D.R."/>
            <person name="Shue B.C."/>
            <person name="Zheng X.H."/>
            <person name="Zhong F."/>
            <person name="Delcher A.L."/>
            <person name="Huson D.H."/>
            <person name="Kravitz S.A."/>
            <person name="Mouchard L."/>
            <person name="Reinert K."/>
            <person name="Remington K.A."/>
            <person name="Clark A.G."/>
            <person name="Waterman M.S."/>
            <person name="Eichler E.E."/>
            <person name="Adams M.D."/>
            <person name="Hunkapiller M.W."/>
            <person name="Myers E.W."/>
            <person name="Venter J.C."/>
        </authorList>
    </citation>
    <scope>NUCLEOTIDE SEQUENCE [LARGE SCALE GENOMIC DNA]</scope>
</reference>
<reference key="8">
    <citation type="journal article" date="2004" name="Genome Res.">
        <title>The status, quality, and expansion of the NIH full-length cDNA project: the Mammalian Gene Collection (MGC).</title>
        <authorList>
            <consortium name="The MGC Project Team"/>
        </authorList>
    </citation>
    <scope>NUCLEOTIDE SEQUENCE [LARGE SCALE MRNA]</scope>
    <source>
        <tissue>Brain</tissue>
    </source>
</reference>
<reference key="9">
    <citation type="journal article" date="2009" name="Mol. Cell">
        <title>Cullin mediates degradation of RhoA through evolutionarily conserved BTB adaptors to control actin cytoskeleton structure and cell movement.</title>
        <authorList>
            <person name="Chen Y."/>
            <person name="Yang Z."/>
            <person name="Meng M."/>
            <person name="Zhao Y."/>
            <person name="Dong N."/>
            <person name="Yan H."/>
            <person name="Liu L."/>
            <person name="Ding M."/>
            <person name="Peng H.B."/>
            <person name="Shao F."/>
        </authorList>
    </citation>
    <scope>FUNCTION</scope>
    <scope>IDENTIFICATION IN A BCR (BTB-CUL3-RBX1) E3 UBIQUITIN LIGASE COMPLEX</scope>
    <scope>INTERACTION WITH RHOA</scope>
    <scope>MUTAGENESIS OF 84-VAL--ILE-86</scope>
</reference>
<reference key="10">
    <citation type="journal article" date="2012" name="J. Biol. Chem.">
        <title>Proliferating cell nuclear antigen (PCNA)-binding protein C1orf124 is a regulator of translesion synthesis.</title>
        <authorList>
            <person name="Ghosal G."/>
            <person name="Leung J.W."/>
            <person name="Nair B.C."/>
            <person name="Fong K.W."/>
            <person name="Chen J."/>
        </authorList>
    </citation>
    <scope>INTERACTION WITH SPRTN</scope>
</reference>
<reference key="11">
    <citation type="journal article" date="2012" name="Nature">
        <title>KCTD13 is a major driver of mirrored neuroanatomical phenotypes of the 16p11.2 copy number variant.</title>
        <authorList>
            <person name="Golzio C."/>
            <person name="Willer J."/>
            <person name="Talkowski M.E."/>
            <person name="Oh E.C."/>
            <person name="Taniguchi Y."/>
            <person name="Jacquemont S."/>
            <person name="Reymond A."/>
            <person name="Sun M."/>
            <person name="Sawa A."/>
            <person name="Gusella J.F."/>
            <person name="Kamiya A."/>
            <person name="Beckmann J.S."/>
            <person name="Katsanis N."/>
        </authorList>
    </citation>
    <scope>POSSIBLE DISEASE MODIFIER FOR AUTISM AND SCHIZOPHRENIA</scope>
</reference>
<reference key="12">
    <citation type="journal article" date="2015" name="Neuron">
        <title>Spatiotemporal 16p11.2 protein network implicates cortical late mid-fetal brain development and KCTD13-Cul3-RhoA pathway in psychiatric diseases.</title>
        <authorList>
            <person name="Lin G.N."/>
            <person name="Corominas R."/>
            <person name="Lemmens I."/>
            <person name="Yang X."/>
            <person name="Tavernier J."/>
            <person name="Hill D.E."/>
            <person name="Vidal M."/>
            <person name="Sebat J."/>
            <person name="Iakoucheva L.M."/>
        </authorList>
    </citation>
    <scope>POSSIBLE DISEASE MODIFIER FOR AUTISM AND SCHIZOPHRENIA</scope>
</reference>
<reference key="13">
    <citation type="journal article" date="2016" name="Psychiatr. Genet.">
        <title>Identification of rare variants in KCTD13 at the schizophrenia risk locus 16p11.2.</title>
        <authorList>
            <person name="Degenhardt F."/>
            <person name="Heinemann B."/>
            <person name="Strohmaier J."/>
            <person name="Pfohl M.A."/>
            <person name="Giegling I."/>
            <person name="Hofmann A."/>
            <person name="Ludwig K.U."/>
            <person name="Witt S.H."/>
            <person name="Ludwig M."/>
            <person name="Forstner A.J."/>
            <person name="Albus M."/>
            <person name="Schwab S.G."/>
            <person name="Borrmann-Hassenbach M."/>
            <person name="Lennertz L."/>
            <person name="Wagner M."/>
            <person name="Hoffmann P."/>
            <person name="Rujescu D."/>
            <person name="Maier W."/>
            <person name="Cichon S."/>
            <person name="Rietschel M."/>
            <person name="Noethen M.M."/>
        </authorList>
    </citation>
    <scope>VARIANT ASN-200</scope>
</reference>
<reference evidence="14" key="14">
    <citation type="journal article" date="2017" name="Biochem. J.">
        <title>Structural complexity in the KCTD family of Cullin3-dependent E3 ubiquitin ligases.</title>
        <authorList>
            <person name="Pinkas D.M."/>
            <person name="Sanvitale C.E."/>
            <person name="Bufton J.C."/>
            <person name="Sorrell F.J."/>
            <person name="Solcan N."/>
            <person name="Chalk R."/>
            <person name="Doutch J."/>
            <person name="Bullock A.N."/>
        </authorList>
    </citation>
    <scope>X-RAY CRYSTALLOGRAPHY (2.70 ANGSTROMS) OF 27-144</scope>
    <scope>SUBUNIT</scope>
</reference>
<keyword id="KW-0002">3D-structure</keyword>
<keyword id="KW-1269">Autism</keyword>
<keyword id="KW-1268">Autism spectrum disorder</keyword>
<keyword id="KW-0225">Disease variant</keyword>
<keyword id="KW-0539">Nucleus</keyword>
<keyword id="KW-1267">Proteomics identification</keyword>
<keyword id="KW-1185">Reference proteome</keyword>
<keyword id="KW-1211">Schizophrenia</keyword>
<keyword id="KW-0833">Ubl conjugation pathway</keyword>
<feature type="chain" id="PRO_0000191297" description="BTB/POZ domain-containing adapter for CUL3-mediated RhoA degradation protein 1">
    <location>
        <begin position="1"/>
        <end position="329"/>
    </location>
</feature>
<feature type="domain" description="BTB" evidence="2">
    <location>
        <begin position="41"/>
        <end position="109"/>
    </location>
</feature>
<feature type="region of interest" description="Disordered" evidence="3">
    <location>
        <begin position="1"/>
        <end position="31"/>
    </location>
</feature>
<feature type="region of interest" description="Disordered" evidence="3">
    <location>
        <begin position="282"/>
        <end position="303"/>
    </location>
</feature>
<feature type="compositionally biased region" description="Low complexity" evidence="3">
    <location>
        <begin position="1"/>
        <end position="22"/>
    </location>
</feature>
<feature type="sequence variant" id="VAR_080045" description="Found in a patient with schizophrenia; uncertain significance; dbSNP:rs774536350." evidence="9">
    <original>D</original>
    <variation>N</variation>
    <location>
        <position position="200"/>
    </location>
</feature>
<feature type="mutagenesis site" description="Abolishes interaction with CUL3 and induces abnormal actin stress fibers." evidence="5">
    <original>VLI</original>
    <variation>AAA</variation>
    <location>
        <begin position="84"/>
        <end position="86"/>
    </location>
</feature>
<feature type="sequence conflict" description="In Ref. 3; AAK27301." evidence="13" ref="3">
    <original>K</original>
    <variation>N</variation>
    <location>
        <position position="251"/>
    </location>
</feature>
<feature type="sequence conflict" description="In Ref. 3; AAK27301." evidence="13" ref="3">
    <original>K</original>
    <variation>R</variation>
    <location>
        <position position="328"/>
    </location>
</feature>
<feature type="strand" evidence="15">
    <location>
        <begin position="42"/>
        <end position="47"/>
    </location>
</feature>
<feature type="strand" evidence="15">
    <location>
        <begin position="50"/>
        <end position="55"/>
    </location>
</feature>
<feature type="helix" evidence="15">
    <location>
        <begin position="56"/>
        <end position="59"/>
    </location>
</feature>
<feature type="strand" evidence="15">
    <location>
        <begin position="61"/>
        <end position="64"/>
    </location>
</feature>
<feature type="helix" evidence="15">
    <location>
        <begin position="65"/>
        <end position="69"/>
    </location>
</feature>
<feature type="turn" evidence="15">
    <location>
        <begin position="70"/>
        <end position="72"/>
    </location>
</feature>
<feature type="strand" evidence="15">
    <location>
        <begin position="84"/>
        <end position="86"/>
    </location>
</feature>
<feature type="turn" evidence="15">
    <location>
        <begin position="90"/>
        <end position="92"/>
    </location>
</feature>
<feature type="helix" evidence="15">
    <location>
        <begin position="93"/>
        <end position="102"/>
    </location>
</feature>
<feature type="helix" evidence="15">
    <location>
        <begin position="111"/>
        <end position="123"/>
    </location>
</feature>
<feature type="helix" evidence="15">
    <location>
        <begin position="127"/>
        <end position="140"/>
    </location>
</feature>
<accession>Q8WZ19</accession>
<accession>A8K0R5</accession>
<accession>Q96P93</accession>
<accession>Q96SA1</accession>
<dbReference type="EMBL" id="AF401315">
    <property type="protein sequence ID" value="AAL14962.2"/>
    <property type="molecule type" value="mRNA"/>
</dbReference>
<dbReference type="EMBL" id="AY027918">
    <property type="protein sequence ID" value="AAK27301.1"/>
    <property type="molecule type" value="mRNA"/>
</dbReference>
<dbReference type="EMBL" id="AF289573">
    <property type="protein sequence ID" value="AAL55757.1"/>
    <property type="molecule type" value="mRNA"/>
</dbReference>
<dbReference type="EMBL" id="AK289630">
    <property type="protein sequence ID" value="BAF82319.1"/>
    <property type="molecule type" value="mRNA"/>
</dbReference>
<dbReference type="EMBL" id="AC120114">
    <property type="status" value="NOT_ANNOTATED_CDS"/>
    <property type="molecule type" value="Genomic_DNA"/>
</dbReference>
<dbReference type="EMBL" id="CH471238">
    <property type="protein sequence ID" value="EAW79969.1"/>
    <property type="molecule type" value="Genomic_DNA"/>
</dbReference>
<dbReference type="EMBL" id="BC036228">
    <property type="protein sequence ID" value="AAH36228.1"/>
    <property type="molecule type" value="mRNA"/>
</dbReference>
<dbReference type="CCDS" id="CCDS10661.1"/>
<dbReference type="RefSeq" id="NP_849194.1">
    <property type="nucleotide sequence ID" value="NM_178863.5"/>
</dbReference>
<dbReference type="PDB" id="4UIJ">
    <property type="method" value="X-ray"/>
    <property type="resolution" value="2.70 A"/>
    <property type="chains" value="A/B/C/D=27-144"/>
</dbReference>
<dbReference type="PDBsum" id="4UIJ"/>
<dbReference type="SMR" id="Q8WZ19"/>
<dbReference type="BioGRID" id="129001">
    <property type="interactions" value="56"/>
</dbReference>
<dbReference type="FunCoup" id="Q8WZ19">
    <property type="interactions" value="506"/>
</dbReference>
<dbReference type="IntAct" id="Q8WZ19">
    <property type="interactions" value="46"/>
</dbReference>
<dbReference type="MINT" id="Q8WZ19"/>
<dbReference type="STRING" id="9606.ENSP00000455785"/>
<dbReference type="iPTMnet" id="Q8WZ19"/>
<dbReference type="PhosphoSitePlus" id="Q8WZ19"/>
<dbReference type="BioMuta" id="KCTD13"/>
<dbReference type="DMDM" id="51701604"/>
<dbReference type="jPOST" id="Q8WZ19"/>
<dbReference type="MassIVE" id="Q8WZ19"/>
<dbReference type="PaxDb" id="9606-ENSP00000455785"/>
<dbReference type="PeptideAtlas" id="Q8WZ19"/>
<dbReference type="ProteomicsDB" id="75205"/>
<dbReference type="Pumba" id="Q8WZ19"/>
<dbReference type="Antibodypedia" id="13396">
    <property type="antibodies" value="149 antibodies from 17 providers"/>
</dbReference>
<dbReference type="DNASU" id="253980"/>
<dbReference type="Ensembl" id="ENST00000308768.9">
    <property type="protein sequence ID" value="ENSP00000311202.5"/>
    <property type="gene ID" value="ENSG00000174943.11"/>
</dbReference>
<dbReference type="Ensembl" id="ENST00000568000.6">
    <property type="protein sequence ID" value="ENSP00000455785.1"/>
    <property type="gene ID" value="ENSG00000174943.11"/>
</dbReference>
<dbReference type="GeneID" id="253980"/>
<dbReference type="KEGG" id="hsa:253980"/>
<dbReference type="MANE-Select" id="ENST00000568000.6">
    <property type="protein sequence ID" value="ENSP00000455785.1"/>
    <property type="RefSeq nucleotide sequence ID" value="NM_178863.5"/>
    <property type="RefSeq protein sequence ID" value="NP_849194.1"/>
</dbReference>
<dbReference type="UCSC" id="uc002duv.5">
    <property type="organism name" value="human"/>
</dbReference>
<dbReference type="AGR" id="HGNC:22234"/>
<dbReference type="CTD" id="253980"/>
<dbReference type="DisGeNET" id="253980"/>
<dbReference type="GeneCards" id="KCTD13"/>
<dbReference type="HGNC" id="HGNC:22234">
    <property type="gene designation" value="KCTD13"/>
</dbReference>
<dbReference type="HPA" id="ENSG00000174943">
    <property type="expression patterns" value="Tissue enhanced (testis)"/>
</dbReference>
<dbReference type="MalaCards" id="KCTD13"/>
<dbReference type="MIM" id="608947">
    <property type="type" value="gene"/>
</dbReference>
<dbReference type="neXtProt" id="NX_Q8WZ19"/>
<dbReference type="OpenTargets" id="ENSG00000174943"/>
<dbReference type="PharmGKB" id="PA134907908"/>
<dbReference type="VEuPathDB" id="HostDB:ENSG00000174943"/>
<dbReference type="eggNOG" id="KOG2716">
    <property type="taxonomic scope" value="Eukaryota"/>
</dbReference>
<dbReference type="GeneTree" id="ENSGT00950000183143"/>
<dbReference type="HOGENOM" id="CLU_060008_0_0_1"/>
<dbReference type="InParanoid" id="Q8WZ19"/>
<dbReference type="OMA" id="FDPLCHI"/>
<dbReference type="OrthoDB" id="2333377at2759"/>
<dbReference type="PAN-GO" id="Q8WZ19">
    <property type="GO annotations" value="5 GO annotations based on evolutionary models"/>
</dbReference>
<dbReference type="PhylomeDB" id="Q8WZ19"/>
<dbReference type="TreeFam" id="TF315649"/>
<dbReference type="PathwayCommons" id="Q8WZ19"/>
<dbReference type="Reactome" id="R-HSA-9696264">
    <property type="pathway name" value="RND3 GTPase cycle"/>
</dbReference>
<dbReference type="Reactome" id="R-HSA-9696270">
    <property type="pathway name" value="RND2 GTPase cycle"/>
</dbReference>
<dbReference type="SignaLink" id="Q8WZ19"/>
<dbReference type="SIGNOR" id="Q8WZ19"/>
<dbReference type="UniPathway" id="UPA00143"/>
<dbReference type="BioGRID-ORCS" id="253980">
    <property type="hits" value="14 hits in 1164 CRISPR screens"/>
</dbReference>
<dbReference type="ChiTaRS" id="KCTD13">
    <property type="organism name" value="human"/>
</dbReference>
<dbReference type="EvolutionaryTrace" id="Q8WZ19"/>
<dbReference type="GeneWiki" id="KCTD13"/>
<dbReference type="GenomeRNAi" id="253980"/>
<dbReference type="Pharos" id="Q8WZ19">
    <property type="development level" value="Tbio"/>
</dbReference>
<dbReference type="PRO" id="PR:Q8WZ19"/>
<dbReference type="Proteomes" id="UP000005640">
    <property type="component" value="Chromosome 16"/>
</dbReference>
<dbReference type="RNAct" id="Q8WZ19">
    <property type="molecule type" value="protein"/>
</dbReference>
<dbReference type="Bgee" id="ENSG00000174943">
    <property type="expression patterns" value="Expressed in right testis and 160 other cell types or tissues"/>
</dbReference>
<dbReference type="ExpressionAtlas" id="Q8WZ19">
    <property type="expression patterns" value="baseline and differential"/>
</dbReference>
<dbReference type="GO" id="GO:0031463">
    <property type="term" value="C:Cul3-RING ubiquitin ligase complex"/>
    <property type="evidence" value="ECO:0000314"/>
    <property type="project" value="UniProtKB"/>
</dbReference>
<dbReference type="GO" id="GO:0005829">
    <property type="term" value="C:cytosol"/>
    <property type="evidence" value="ECO:0000304"/>
    <property type="project" value="Reactome"/>
</dbReference>
<dbReference type="GO" id="GO:0016604">
    <property type="term" value="C:nuclear body"/>
    <property type="evidence" value="ECO:0000314"/>
    <property type="project" value="HPA"/>
</dbReference>
<dbReference type="GO" id="GO:0005654">
    <property type="term" value="C:nucleoplasm"/>
    <property type="evidence" value="ECO:0000314"/>
    <property type="project" value="HPA"/>
</dbReference>
<dbReference type="GO" id="GO:0042802">
    <property type="term" value="F:identical protein binding"/>
    <property type="evidence" value="ECO:0000353"/>
    <property type="project" value="IntAct"/>
</dbReference>
<dbReference type="GO" id="GO:0019904">
    <property type="term" value="F:protein domain specific binding"/>
    <property type="evidence" value="ECO:0007669"/>
    <property type="project" value="Ensembl"/>
</dbReference>
<dbReference type="GO" id="GO:0031267">
    <property type="term" value="F:small GTPase binding"/>
    <property type="evidence" value="ECO:0000314"/>
    <property type="project" value="UniProtKB"/>
</dbReference>
<dbReference type="GO" id="GO:0016477">
    <property type="term" value="P:cell migration"/>
    <property type="evidence" value="ECO:0000315"/>
    <property type="project" value="UniProtKB"/>
</dbReference>
<dbReference type="GO" id="GO:0035024">
    <property type="term" value="P:negative regulation of Rho protein signal transduction"/>
    <property type="evidence" value="ECO:0000315"/>
    <property type="project" value="UniProtKB"/>
</dbReference>
<dbReference type="GO" id="GO:0045740">
    <property type="term" value="P:positive regulation of DNA replication"/>
    <property type="evidence" value="ECO:0007669"/>
    <property type="project" value="Ensembl"/>
</dbReference>
<dbReference type="GO" id="GO:0050806">
    <property type="term" value="P:positive regulation of synaptic transmission"/>
    <property type="evidence" value="ECO:0000250"/>
    <property type="project" value="UniProtKB"/>
</dbReference>
<dbReference type="GO" id="GO:0043161">
    <property type="term" value="P:proteasome-mediated ubiquitin-dependent protein catabolic process"/>
    <property type="evidence" value="ECO:0000314"/>
    <property type="project" value="UniProtKB"/>
</dbReference>
<dbReference type="GO" id="GO:0051260">
    <property type="term" value="P:protein homooligomerization"/>
    <property type="evidence" value="ECO:0007669"/>
    <property type="project" value="InterPro"/>
</dbReference>
<dbReference type="GO" id="GO:0016567">
    <property type="term" value="P:protein ubiquitination"/>
    <property type="evidence" value="ECO:0000314"/>
    <property type="project" value="UniProtKB"/>
</dbReference>
<dbReference type="GO" id="GO:0043149">
    <property type="term" value="P:stress fiber assembly"/>
    <property type="evidence" value="ECO:0000315"/>
    <property type="project" value="UniProtKB"/>
</dbReference>
<dbReference type="CDD" id="cd18400">
    <property type="entry name" value="BTB_POZ_KCTD13_BACURD1"/>
    <property type="match status" value="1"/>
</dbReference>
<dbReference type="FunFam" id="3.30.710.10:FF:000013">
    <property type="entry name" value="BTB/POZ domain-containing adapter for CUL3-mediated RhoA degradation protein 3"/>
    <property type="match status" value="1"/>
</dbReference>
<dbReference type="Gene3D" id="3.30.710.10">
    <property type="entry name" value="Potassium Channel Kv1.1, Chain A"/>
    <property type="match status" value="1"/>
</dbReference>
<dbReference type="InterPro" id="IPR045068">
    <property type="entry name" value="BACURD1-3"/>
</dbReference>
<dbReference type="InterPro" id="IPR000210">
    <property type="entry name" value="BTB/POZ_dom"/>
</dbReference>
<dbReference type="InterPro" id="IPR011333">
    <property type="entry name" value="SKP1/BTB/POZ_sf"/>
</dbReference>
<dbReference type="InterPro" id="IPR003131">
    <property type="entry name" value="T1-type_BTB"/>
</dbReference>
<dbReference type="PANTHER" id="PTHR11145">
    <property type="entry name" value="BTB/POZ DOMAIN-CONTAINING ADAPTER FOR CUL3-MEDIATED RHOA DEGRADATION PROTEIN FAMILY MEMBER"/>
    <property type="match status" value="1"/>
</dbReference>
<dbReference type="PANTHER" id="PTHR11145:SF18">
    <property type="entry name" value="BTB_POZ DOMAIN-CONTAINING ADAPTER FOR CUL3-MEDIATED RHOA DEGRADATION PROTEIN 1"/>
    <property type="match status" value="1"/>
</dbReference>
<dbReference type="Pfam" id="PF02214">
    <property type="entry name" value="BTB_2"/>
    <property type="match status" value="1"/>
</dbReference>
<dbReference type="SMART" id="SM00225">
    <property type="entry name" value="BTB"/>
    <property type="match status" value="1"/>
</dbReference>
<dbReference type="SUPFAM" id="SSF54695">
    <property type="entry name" value="POZ domain"/>
    <property type="match status" value="1"/>
</dbReference>
<dbReference type="PROSITE" id="PS50097">
    <property type="entry name" value="BTB"/>
    <property type="match status" value="1"/>
</dbReference>
<organism>
    <name type="scientific">Homo sapiens</name>
    <name type="common">Human</name>
    <dbReference type="NCBI Taxonomy" id="9606"/>
    <lineage>
        <taxon>Eukaryota</taxon>
        <taxon>Metazoa</taxon>
        <taxon>Chordata</taxon>
        <taxon>Craniata</taxon>
        <taxon>Vertebrata</taxon>
        <taxon>Euteleostomi</taxon>
        <taxon>Mammalia</taxon>
        <taxon>Eutheria</taxon>
        <taxon>Euarchontoglires</taxon>
        <taxon>Primates</taxon>
        <taxon>Haplorrhini</taxon>
        <taxon>Catarrhini</taxon>
        <taxon>Hominidae</taxon>
        <taxon>Homo</taxon>
    </lineage>
</organism>
<proteinExistence type="evidence at protein level"/>
<comment type="function">
    <text evidence="1 5">Substrate-specific adapter of a BCR (BTB-CUL3-RBX1) E3 ubiquitin-protein ligase complex required for synaptic transmission (PubMed:19782033). The BCR(KCTD13) E3 ubiquitin ligase complex mediates the ubiquitination of RHOA, leading to its degradation by the proteasome (PubMed:19782033) Degradation of RHOA regulates the actin cytoskeleton and promotes synaptic transmission (By similarity).</text>
</comment>
<comment type="pathway">
    <text evidence="5">Protein modification; protein ubiquitination.</text>
</comment>
<comment type="subunit">
    <text evidence="4 5 7 10">Homotetramer; forms a two-fold symmetric tetramer in solution (PubMed:28963344). Interacts with CUL3; interaction is direct and forms a 5:5 heterodecamer (PubMed:28963344). Component of the BCR(KCTD13) E3 ubiquitin ligase complex, at least composed of CUL3, KCTD13/BACURD1 and RBX1. Interacts with RHOA; with a preference for RhoA-GDP (PubMed:19782033). Interacts with POLD2 and PCNA (PubMed:11593007). Interacts with SPRTN (PubMed:22902628).</text>
</comment>
<comment type="interaction">
    <interactant intactId="EBI-742916">
        <id>Q8WZ19</id>
    </interactant>
    <interactant intactId="EBI-742909">
        <id>Q9H6L4</id>
        <label>ARMC7</label>
    </interactant>
    <organismsDiffer>false</organismsDiffer>
    <experiments>4</experiments>
</comment>
<comment type="interaction">
    <interactant intactId="EBI-742916">
        <id>Q8WZ19</id>
    </interactant>
    <interactant intactId="EBI-747185">
        <id>O95817</id>
        <label>BAG3</label>
    </interactant>
    <organismsDiffer>false</organismsDiffer>
    <experiments>3</experiments>
</comment>
<comment type="interaction">
    <interactant intactId="EBI-742916">
        <id>Q8WZ19</id>
    </interactant>
    <interactant intactId="EBI-295634">
        <id>Q16543</id>
        <label>CDC37</label>
    </interactant>
    <organismsDiffer>false</organismsDiffer>
    <experiments>3</experiments>
</comment>
<comment type="interaction">
    <interactant intactId="EBI-742916">
        <id>Q8WZ19</id>
    </interactant>
    <interactant intactId="EBI-456129">
        <id>Q13618</id>
        <label>CUL3</label>
    </interactant>
    <organismsDiffer>false</organismsDiffer>
    <experiments>9</experiments>
</comment>
<comment type="interaction">
    <interactant intactId="EBI-742916">
        <id>Q8WZ19</id>
    </interactant>
    <interactant intactId="EBI-371876">
        <id>Q9NQT4</id>
        <label>EXOSC5</label>
    </interactant>
    <organismsDiffer>false</organismsDiffer>
    <experiments>3</experiments>
</comment>
<comment type="interaction">
    <interactant intactId="EBI-742916">
        <id>Q8WZ19</id>
    </interactant>
    <interactant intactId="EBI-9641086">
        <id>P21333-2</id>
        <label>FLNA</label>
    </interactant>
    <organismsDiffer>false</organismsDiffer>
    <experiments>3</experiments>
</comment>
<comment type="interaction">
    <interactant intactId="EBI-742916">
        <id>Q8WZ19</id>
    </interactant>
    <interactant intactId="EBI-713291">
        <id>P51114</id>
        <label>FXR1</label>
    </interactant>
    <organismsDiffer>false</organismsDiffer>
    <experiments>2</experiments>
</comment>
<comment type="interaction">
    <interactant intactId="EBI-742916">
        <id>Q8WZ19</id>
    </interactant>
    <interactant intactId="EBI-739467">
        <id>Q9H8Y8</id>
        <label>GORASP2</label>
    </interactant>
    <organismsDiffer>false</organismsDiffer>
    <experiments>3</experiments>
</comment>
<comment type="interaction">
    <interactant intactId="EBI-742916">
        <id>Q8WZ19</id>
    </interactant>
    <interactant intactId="EBI-352682">
        <id>P04792</id>
        <label>HSPB1</label>
    </interactant>
    <organismsDiffer>false</organismsDiffer>
    <experiments>3</experiments>
</comment>
<comment type="interaction">
    <interactant intactId="EBI-742916">
        <id>Q8WZ19</id>
    </interactant>
    <interactant intactId="EBI-2505886">
        <id>Q9H3F6</id>
        <label>KCTD10</label>
    </interactant>
    <organismsDiffer>false</organismsDiffer>
    <experiments>6</experiments>
</comment>
<comment type="interaction">
    <interactant intactId="EBI-742916">
        <id>Q8WZ19</id>
    </interactant>
    <interactant intactId="EBI-742916">
        <id>Q8WZ19</id>
        <label>KCTD13</label>
    </interactant>
    <organismsDiffer>false</organismsDiffer>
    <experiments>6</experiments>
</comment>
<comment type="interaction">
    <interactant intactId="EBI-742916">
        <id>Q8WZ19</id>
    </interactant>
    <interactant intactId="EBI-10975473">
        <id>O60333-2</id>
        <label>KIF1B</label>
    </interactant>
    <organismsDiffer>false</organismsDiffer>
    <experiments>3</experiments>
</comment>
<comment type="interaction">
    <interactant intactId="EBI-742916">
        <id>Q8WZ19</id>
    </interactant>
    <interactant intactId="EBI-739832">
        <id>Q8TBB1</id>
        <label>LNX1</label>
    </interactant>
    <organismsDiffer>false</organismsDiffer>
    <experiments>5</experiments>
</comment>
<comment type="interaction">
    <interactant intactId="EBI-742916">
        <id>Q8WZ19</id>
    </interactant>
    <interactant intactId="EBI-1050743">
        <id>P31153</id>
        <label>MAT2A</label>
    </interactant>
    <organismsDiffer>false</organismsDiffer>
    <experiments>3</experiments>
</comment>
<comment type="interaction">
    <interactant intactId="EBI-742916">
        <id>Q8WZ19</id>
    </interactant>
    <interactant intactId="EBI-741158">
        <id>Q96HA8</id>
        <label>NTAQ1</label>
    </interactant>
    <organismsDiffer>false</organismsDiffer>
    <experiments>3</experiments>
</comment>
<comment type="interaction">
    <interactant intactId="EBI-742916">
        <id>Q8WZ19</id>
    </interactant>
    <interactant intactId="EBI-473160">
        <id>Q8N2W9</id>
        <label>PIAS4</label>
    </interactant>
    <organismsDiffer>false</organismsDiffer>
    <experiments>3</experiments>
</comment>
<comment type="interaction">
    <interactant intactId="EBI-742916">
        <id>Q8WZ19</id>
    </interactant>
    <interactant intactId="EBI-1055079">
        <id>O15160</id>
        <label>POLR1C</label>
    </interactant>
    <organismsDiffer>false</organismsDiffer>
    <experiments>3</experiments>
</comment>
<comment type="interaction">
    <interactant intactId="EBI-742916">
        <id>Q8WZ19</id>
    </interactant>
    <interactant intactId="EBI-749195">
        <id>P60891</id>
        <label>PRPS1</label>
    </interactant>
    <organismsDiffer>false</organismsDiffer>
    <experiments>3</experiments>
</comment>
<comment type="interaction">
    <interactant intactId="EBI-742916">
        <id>Q8WZ19</id>
    </interactant>
    <interactant intactId="EBI-359352">
        <id>P25786</id>
        <label>PSMA1</label>
    </interactant>
    <organismsDiffer>false</organismsDiffer>
    <experiments>3</experiments>
</comment>
<comment type="interaction">
    <interactant intactId="EBI-742916">
        <id>Q8WZ19</id>
    </interactant>
    <interactant intactId="EBI-396669">
        <id>Q9Y3C5</id>
        <label>RNF11</label>
    </interactant>
    <organismsDiffer>false</organismsDiffer>
    <experiments>3</experiments>
</comment>
<comment type="interaction">
    <interactant intactId="EBI-742916">
        <id>Q8WZ19</id>
    </interactant>
    <interactant intactId="EBI-2505861">
        <id>Q13829</id>
        <label>TNFAIP1</label>
    </interactant>
    <organismsDiffer>false</organismsDiffer>
    <experiments>13</experiments>
</comment>
<comment type="interaction">
    <interactant intactId="EBI-742916">
        <id>Q8WZ19</id>
    </interactant>
    <interactant intactId="EBI-720609">
        <id>O76024</id>
        <label>WFS1</label>
    </interactant>
    <organismsDiffer>false</organismsDiffer>
    <experiments>3</experiments>
</comment>
<comment type="interaction">
    <interactant intactId="EBI-742916">
        <id>Q8WZ19</id>
    </interactant>
    <interactant intactId="EBI-746595">
        <id>Q96E35</id>
        <label>ZMYND19</label>
    </interactant>
    <organismsDiffer>false</organismsDiffer>
    <experiments>7</experiments>
</comment>
<comment type="subcellular location">
    <subcellularLocation>
        <location evidence="4">Nucleus</location>
    </subcellularLocation>
</comment>
<comment type="tissue specificity">
    <text evidence="4">Expressed in a wide variety of tissues.</text>
</comment>
<comment type="induction">
    <text evidence="4">By TNF and IL6/interleukin-6.</text>
</comment>
<comment type="disease">
    <text evidence="6 8">The gene represented in this entry may act as a disease modifier for autism and schizophrenia associated with recurrent deletions and duplications of chromosome 16p11.2 region (PubMed:22596160, PubMed:25695269).</text>
</comment>
<comment type="similarity">
    <text evidence="13">Belongs to the BACURD family.</text>
</comment>
<comment type="caution">
    <text evidence="6">Baed on animal models in mouse and zebrafish, it was suggested that KCTD13 is the major factor inducing the macrocephaly phenotype associated with the 16p11.2 deletion (PubMed:22596160). However, a subsequent report showed that KCTD13 does not play a role in brain size.</text>
</comment>
<gene>
    <name type="primary">KCTD13</name>
    <name evidence="12" type="synonym">BACURD1</name>
    <name evidence="11" type="synonym">PDIP1</name>
    <name type="synonym">POLDIP1</name>
    <name type="ORF">FKSG86</name>
    <name type="ORF">PP6832</name>
</gene>
<sequence>MSAEASGPAAAAAPSLEAPKPSGLEPGPAAYGLKPLTPNSKYVKLNVGGSLHYTTLRTLTGQDTMLKAMFSGRVEVLTDAGGWVLIDRSGRHFGTILNYLRDGSVPLPESTRELGELLGEARYYLVQGLIEDCQLALQQKRETLSPLCLIPMVTSPREEQQLLASTSKPVVKLLHNRSNNKYSYTSTSDDNLLKNIELFDKLALRFHGRLLFLKDVLGDEICCWSFYGQGRKIAEVCCTSIVYATEKKQTKVEFPEARIFEETLNILIYETPRGPDPALLEATGGAAGAGGAGRGEDEENREHRVRRIHVRRHITHDERPHGQQIVFKD</sequence>